<gene>
    <name type="primary">set2</name>
    <name type="synonym">kmt3</name>
    <name type="ORF">SPAC29B12.02c</name>
</gene>
<feature type="chain" id="PRO_0000269792" description="Histone-lysine N-methyltransferase, H3 lysine-36 specific">
    <location>
        <begin position="1"/>
        <end position="798"/>
    </location>
</feature>
<feature type="domain" description="AWS" evidence="6">
    <location>
        <begin position="124"/>
        <end position="178"/>
    </location>
</feature>
<feature type="domain" description="SET" evidence="5">
    <location>
        <begin position="180"/>
        <end position="297"/>
    </location>
</feature>
<feature type="domain" description="Post-SET" evidence="4">
    <location>
        <begin position="304"/>
        <end position="320"/>
    </location>
</feature>
<feature type="region of interest" description="Disordered" evidence="8">
    <location>
        <begin position="1"/>
        <end position="82"/>
    </location>
</feature>
<feature type="region of interest" description="Disordered" evidence="8">
    <location>
        <begin position="500"/>
        <end position="615"/>
    </location>
</feature>
<feature type="region of interest" description="Disordered" evidence="8">
    <location>
        <begin position="667"/>
        <end position="689"/>
    </location>
</feature>
<feature type="region of interest" description="Disordered" evidence="8">
    <location>
        <begin position="777"/>
        <end position="798"/>
    </location>
</feature>
<feature type="coiled-coil region" evidence="3">
    <location>
        <begin position="627"/>
        <end position="674"/>
    </location>
</feature>
<feature type="compositionally biased region" description="Polar residues" evidence="8">
    <location>
        <begin position="1"/>
        <end position="11"/>
    </location>
</feature>
<feature type="compositionally biased region" description="Basic and acidic residues" evidence="8">
    <location>
        <begin position="44"/>
        <end position="60"/>
    </location>
</feature>
<feature type="compositionally biased region" description="Low complexity" evidence="8">
    <location>
        <begin position="61"/>
        <end position="78"/>
    </location>
</feature>
<feature type="compositionally biased region" description="Polar residues" evidence="8">
    <location>
        <begin position="507"/>
        <end position="522"/>
    </location>
</feature>
<feature type="compositionally biased region" description="Basic and acidic residues" evidence="8">
    <location>
        <begin position="525"/>
        <end position="537"/>
    </location>
</feature>
<feature type="compositionally biased region" description="Basic residues" evidence="8">
    <location>
        <begin position="576"/>
        <end position="593"/>
    </location>
</feature>
<feature type="compositionally biased region" description="Polar residues" evidence="8">
    <location>
        <begin position="595"/>
        <end position="615"/>
    </location>
</feature>
<feature type="compositionally biased region" description="Basic residues" evidence="8">
    <location>
        <begin position="667"/>
        <end position="678"/>
    </location>
</feature>
<feature type="compositionally biased region" description="Polar residues" evidence="8">
    <location>
        <begin position="777"/>
        <end position="790"/>
    </location>
</feature>
<feature type="modified residue" description="Phosphoserine" evidence="10">
    <location>
        <position position="67"/>
    </location>
</feature>
<feature type="modified residue" description="Phosphothreonine" evidence="10">
    <location>
        <position position="545"/>
    </location>
</feature>
<feature type="modified residue" description="Phosphoserine" evidence="10">
    <location>
        <position position="594"/>
    </location>
</feature>
<feature type="modified residue" description="Phosphoserine" evidence="10">
    <location>
        <position position="596"/>
    </location>
</feature>
<feature type="modified residue" description="Phosphothreonine" evidence="10">
    <location>
        <position position="783"/>
    </location>
</feature>
<feature type="modified residue" description="Phosphothreonine" evidence="10">
    <location>
        <position position="785"/>
    </location>
</feature>
<feature type="modified residue" description="Phosphoserine" evidence="10">
    <location>
        <position position="787"/>
    </location>
</feature>
<feature type="modified residue" description="Phosphoserine" evidence="10">
    <location>
        <position position="789"/>
    </location>
</feature>
<feature type="modified residue" description="Phosphoserine" evidence="10">
    <location>
        <position position="793"/>
    </location>
</feature>
<evidence type="ECO:0000250" key="1"/>
<evidence type="ECO:0000250" key="2">
    <source>
        <dbReference type="UniProtKB" id="P46995"/>
    </source>
</evidence>
<evidence type="ECO:0000255" key="3"/>
<evidence type="ECO:0000255" key="4">
    <source>
        <dbReference type="PROSITE-ProRule" id="PRU00155"/>
    </source>
</evidence>
<evidence type="ECO:0000255" key="5">
    <source>
        <dbReference type="PROSITE-ProRule" id="PRU00190"/>
    </source>
</evidence>
<evidence type="ECO:0000255" key="6">
    <source>
        <dbReference type="PROSITE-ProRule" id="PRU00562"/>
    </source>
</evidence>
<evidence type="ECO:0000255" key="7">
    <source>
        <dbReference type="PROSITE-ProRule" id="PRU00901"/>
    </source>
</evidence>
<evidence type="ECO:0000256" key="8">
    <source>
        <dbReference type="SAM" id="MobiDB-lite"/>
    </source>
</evidence>
<evidence type="ECO:0000269" key="9">
    <source>
    </source>
</evidence>
<evidence type="ECO:0000269" key="10">
    <source>
    </source>
</evidence>
<reference key="1">
    <citation type="journal article" date="2002" name="Nature">
        <title>The genome sequence of Schizosaccharomyces pombe.</title>
        <authorList>
            <person name="Wood V."/>
            <person name="Gwilliam R."/>
            <person name="Rajandream M.A."/>
            <person name="Lyne M.H."/>
            <person name="Lyne R."/>
            <person name="Stewart A."/>
            <person name="Sgouros J.G."/>
            <person name="Peat N."/>
            <person name="Hayles J."/>
            <person name="Baker S.G."/>
            <person name="Basham D."/>
            <person name="Bowman S."/>
            <person name="Brooks K."/>
            <person name="Brown D."/>
            <person name="Brown S."/>
            <person name="Chillingworth T."/>
            <person name="Churcher C.M."/>
            <person name="Collins M."/>
            <person name="Connor R."/>
            <person name="Cronin A."/>
            <person name="Davis P."/>
            <person name="Feltwell T."/>
            <person name="Fraser A."/>
            <person name="Gentles S."/>
            <person name="Goble A."/>
            <person name="Hamlin N."/>
            <person name="Harris D.E."/>
            <person name="Hidalgo J."/>
            <person name="Hodgson G."/>
            <person name="Holroyd S."/>
            <person name="Hornsby T."/>
            <person name="Howarth S."/>
            <person name="Huckle E.J."/>
            <person name="Hunt S."/>
            <person name="Jagels K."/>
            <person name="James K.D."/>
            <person name="Jones L."/>
            <person name="Jones M."/>
            <person name="Leather S."/>
            <person name="McDonald S."/>
            <person name="McLean J."/>
            <person name="Mooney P."/>
            <person name="Moule S."/>
            <person name="Mungall K.L."/>
            <person name="Murphy L.D."/>
            <person name="Niblett D."/>
            <person name="Odell C."/>
            <person name="Oliver K."/>
            <person name="O'Neil S."/>
            <person name="Pearson D."/>
            <person name="Quail M.A."/>
            <person name="Rabbinowitsch E."/>
            <person name="Rutherford K.M."/>
            <person name="Rutter S."/>
            <person name="Saunders D."/>
            <person name="Seeger K."/>
            <person name="Sharp S."/>
            <person name="Skelton J."/>
            <person name="Simmonds M.N."/>
            <person name="Squares R."/>
            <person name="Squares S."/>
            <person name="Stevens K."/>
            <person name="Taylor K."/>
            <person name="Taylor R.G."/>
            <person name="Tivey A."/>
            <person name="Walsh S.V."/>
            <person name="Warren T."/>
            <person name="Whitehead S."/>
            <person name="Woodward J.R."/>
            <person name="Volckaert G."/>
            <person name="Aert R."/>
            <person name="Robben J."/>
            <person name="Grymonprez B."/>
            <person name="Weltjens I."/>
            <person name="Vanstreels E."/>
            <person name="Rieger M."/>
            <person name="Schaefer M."/>
            <person name="Mueller-Auer S."/>
            <person name="Gabel C."/>
            <person name="Fuchs M."/>
            <person name="Duesterhoeft A."/>
            <person name="Fritzc C."/>
            <person name="Holzer E."/>
            <person name="Moestl D."/>
            <person name="Hilbert H."/>
            <person name="Borzym K."/>
            <person name="Langer I."/>
            <person name="Beck A."/>
            <person name="Lehrach H."/>
            <person name="Reinhardt R."/>
            <person name="Pohl T.M."/>
            <person name="Eger P."/>
            <person name="Zimmermann W."/>
            <person name="Wedler H."/>
            <person name="Wambutt R."/>
            <person name="Purnelle B."/>
            <person name="Goffeau A."/>
            <person name="Cadieu E."/>
            <person name="Dreano S."/>
            <person name="Gloux S."/>
            <person name="Lelaure V."/>
            <person name="Mottier S."/>
            <person name="Galibert F."/>
            <person name="Aves S.J."/>
            <person name="Xiang Z."/>
            <person name="Hunt C."/>
            <person name="Moore K."/>
            <person name="Hurst S.M."/>
            <person name="Lucas M."/>
            <person name="Rochet M."/>
            <person name="Gaillardin C."/>
            <person name="Tallada V.A."/>
            <person name="Garzon A."/>
            <person name="Thode G."/>
            <person name="Daga R.R."/>
            <person name="Cruzado L."/>
            <person name="Jimenez J."/>
            <person name="Sanchez M."/>
            <person name="del Rey F."/>
            <person name="Benito J."/>
            <person name="Dominguez A."/>
            <person name="Revuelta J.L."/>
            <person name="Moreno S."/>
            <person name="Armstrong J."/>
            <person name="Forsburg S.L."/>
            <person name="Cerutti L."/>
            <person name="Lowe T."/>
            <person name="McCombie W.R."/>
            <person name="Paulsen I."/>
            <person name="Potashkin J."/>
            <person name="Shpakovski G.V."/>
            <person name="Ussery D."/>
            <person name="Barrell B.G."/>
            <person name="Nurse P."/>
        </authorList>
    </citation>
    <scope>NUCLEOTIDE SEQUENCE [LARGE SCALE GENOMIC DNA]</scope>
    <source>
        <strain>972 / ATCC 24843</strain>
    </source>
</reference>
<reference key="2">
    <citation type="journal article" date="2005" name="Eukaryot. Cell">
        <title>Histone H3 K36 methylation is associated with transcription elongation in Schizosaccharomyces pombe.</title>
        <authorList>
            <person name="Morris S.A."/>
            <person name="Shibata Y."/>
            <person name="Noma K."/>
            <person name="Tsukamoto Y."/>
            <person name="Warren E."/>
            <person name="Temple B."/>
            <person name="Grewal S.I.S."/>
            <person name="Strahl B.D."/>
        </authorList>
    </citation>
    <scope>FUNCTION</scope>
</reference>
<reference key="3">
    <citation type="journal article" date="2008" name="J. Proteome Res.">
        <title>Phosphoproteome analysis of fission yeast.</title>
        <authorList>
            <person name="Wilson-Grady J.T."/>
            <person name="Villen J."/>
            <person name="Gygi S.P."/>
        </authorList>
    </citation>
    <scope>PHOSPHORYLATION [LARGE SCALE ANALYSIS] AT SER-67; THR-545; SER-594; SER-596; THR-783; THR-785; SER-787; SER-789 AND SER-793</scope>
    <scope>IDENTIFICATION BY MASS SPECTROMETRY</scope>
</reference>
<proteinExistence type="evidence at protein level"/>
<comment type="function">
    <text evidence="2 9">Histone methyltransferase that trimethylates histone H3 'Lys-36' forming H3K36me3 (By similarity). Involved in transcription elongation as well as in transcription repression (PubMed:16087749).</text>
</comment>
<comment type="catalytic activity">
    <reaction evidence="2 7">
        <text>L-lysyl(36)-[histone H3] + 3 S-adenosyl-L-methionine = N(6),N(6),N(6)-trimethyl-L-lysyl(36)-[histone H3] + 3 S-adenosyl-L-homocysteine + 3 H(+)</text>
        <dbReference type="Rhea" id="RHEA:60324"/>
        <dbReference type="Rhea" id="RHEA-COMP:9785"/>
        <dbReference type="Rhea" id="RHEA-COMP:15536"/>
        <dbReference type="ChEBI" id="CHEBI:15378"/>
        <dbReference type="ChEBI" id="CHEBI:29969"/>
        <dbReference type="ChEBI" id="CHEBI:57856"/>
        <dbReference type="ChEBI" id="CHEBI:59789"/>
        <dbReference type="ChEBI" id="CHEBI:61961"/>
        <dbReference type="EC" id="2.1.1.359"/>
    </reaction>
</comment>
<comment type="subcellular location">
    <subcellularLocation>
        <location evidence="1">Nucleus</location>
    </subcellularLocation>
    <subcellularLocation>
        <location evidence="1">Chromosome</location>
    </subcellularLocation>
</comment>
<comment type="domain">
    <text evidence="1">The AWS and SET domains are necessary for transcription repression.</text>
</comment>
<comment type="similarity">
    <text evidence="7">Belongs to the class V-like SAM-binding methyltransferase superfamily. Histone-lysine methyltransferase family. SET2 subfamily.</text>
</comment>
<organism>
    <name type="scientific">Schizosaccharomyces pombe (strain 972 / ATCC 24843)</name>
    <name type="common">Fission yeast</name>
    <dbReference type="NCBI Taxonomy" id="284812"/>
    <lineage>
        <taxon>Eukaryota</taxon>
        <taxon>Fungi</taxon>
        <taxon>Dikarya</taxon>
        <taxon>Ascomycota</taxon>
        <taxon>Taphrinomycotina</taxon>
        <taxon>Schizosaccharomycetes</taxon>
        <taxon>Schizosaccharomycetales</taxon>
        <taxon>Schizosaccharomycetaceae</taxon>
        <taxon>Schizosaccharomyces</taxon>
    </lineage>
</organism>
<sequence length="798" mass="90679">MQTASSLSVLTPLNEENVDRKSSWSKDTIAVQAVGSSPSSSSSHDFESKEDAEGMNKDESAPSPSTSSPSSASSRSQSKYVRKEALPPQLFHHLDSAKDKALTTFEEIQECQYASANIGKPPENEAMICDCRPHWVDGVNVACGHGSNCINRMTSIECTDEDNVCGPSCQNQRFQRHEFAKVDVFLTEKKGFGLRADANLPKDTFVYEYIGEVIPEQKFRKRMRQYDSEGIKHFYFMMLQKGEYIDATKRGSLARFCNHSCRPNCYVDKWMVGDKLRMGIFCKRDIIRGEELTFDYNVDRYGAQAQPCYCGEPCCVGYIGGKTQTEAQSKLPENVREALGIEDEEDSWENITARRQRRKKGIDETSKIIEEVQPTPLTSESATKVIGVLLQTKDDLLTRKLMERIFLTSDPSVCRSIIALRGYNIFGLMLKKFSIDIEFILRSIKTMLSWPRLTRNKIQDSNIEPVVQEFCDHENEEVKDHAKTLLKEWESLEIAYRIPRRKPGQVAPQSTNAEPSNNQSNPPLRDQEPQRGDKGDIKSAINNSTEDLSKKHPALHSSRPSDSRSRSKFGNDYQSHSKHNLFRKNSFPKRRRLSNSDTPSETTTPNNEQEQVSNQANKVDLNKIISAAMESVNQKNVLKAQKEEEERIAQQKREEKRRLAYEESLKRHAKKLHEKKTKSSQDATIDHHLTSHSPESIAFKAVLAKFFANKTARYQEKLGKAEFKLRVKKMTEIILKKHIQLVLSKKEKALPDELSDSQQRKLRVWAFRYLDTVVSRSGTATTTPTDSPSIGESPKKAA</sequence>
<accession>O14026</accession>
<keyword id="KW-0158">Chromosome</keyword>
<keyword id="KW-0175">Coiled coil</keyword>
<keyword id="KW-0489">Methyltransferase</keyword>
<keyword id="KW-0539">Nucleus</keyword>
<keyword id="KW-0597">Phosphoprotein</keyword>
<keyword id="KW-1185">Reference proteome</keyword>
<keyword id="KW-0678">Repressor</keyword>
<keyword id="KW-0949">S-adenosyl-L-methionine</keyword>
<keyword id="KW-0804">Transcription</keyword>
<keyword id="KW-0805">Transcription regulation</keyword>
<keyword id="KW-0808">Transferase</keyword>
<protein>
    <recommendedName>
        <fullName>Histone-lysine N-methyltransferase, H3 lysine-36 specific</fullName>
        <ecNumber evidence="2">2.1.1.359</ecNumber>
    </recommendedName>
    <alternativeName>
        <fullName>Lysine N-methyltransferase 3</fullName>
    </alternativeName>
    <alternativeName>
        <fullName>SET domain-containing protein 2</fullName>
    </alternativeName>
</protein>
<name>SET2_SCHPO</name>
<dbReference type="EC" id="2.1.1.359" evidence="2"/>
<dbReference type="EMBL" id="CU329670">
    <property type="protein sequence ID" value="CAB16247.1"/>
    <property type="molecule type" value="Genomic_DNA"/>
</dbReference>
<dbReference type="PIR" id="T38490">
    <property type="entry name" value="T38490"/>
</dbReference>
<dbReference type="RefSeq" id="NP_594980.1">
    <property type="nucleotide sequence ID" value="NM_001020411.2"/>
</dbReference>
<dbReference type="SMR" id="O14026"/>
<dbReference type="BioGRID" id="278547">
    <property type="interactions" value="38"/>
</dbReference>
<dbReference type="FunCoup" id="O14026">
    <property type="interactions" value="103"/>
</dbReference>
<dbReference type="STRING" id="284812.O14026"/>
<dbReference type="iPTMnet" id="O14026"/>
<dbReference type="PaxDb" id="4896-SPAC29B12.02c.1"/>
<dbReference type="EnsemblFungi" id="SPAC29B12.02c.1">
    <property type="protein sequence ID" value="SPAC29B12.02c.1:pep"/>
    <property type="gene ID" value="SPAC29B12.02c"/>
</dbReference>
<dbReference type="GeneID" id="2542070"/>
<dbReference type="KEGG" id="spo:2542070"/>
<dbReference type="PomBase" id="SPAC29B12.02c">
    <property type="gene designation" value="set2"/>
</dbReference>
<dbReference type="VEuPathDB" id="FungiDB:SPAC29B12.02c"/>
<dbReference type="eggNOG" id="KOG4442">
    <property type="taxonomic scope" value="Eukaryota"/>
</dbReference>
<dbReference type="HOGENOM" id="CLU_008492_1_1_1"/>
<dbReference type="InParanoid" id="O14026"/>
<dbReference type="OMA" id="MTSIECT"/>
<dbReference type="PhylomeDB" id="O14026"/>
<dbReference type="Reactome" id="R-SPO-3214841">
    <property type="pathway name" value="PKMTs methylate histone lysines"/>
</dbReference>
<dbReference type="Reactome" id="R-SPO-5693565">
    <property type="pathway name" value="Recruitment and ATM-mediated phosphorylation of repair and signaling proteins at DNA double strand breaks"/>
</dbReference>
<dbReference type="PRO" id="PR:O14026"/>
<dbReference type="Proteomes" id="UP000002485">
    <property type="component" value="Chromosome I"/>
</dbReference>
<dbReference type="GO" id="GO:0000785">
    <property type="term" value="C:chromatin"/>
    <property type="evidence" value="ECO:0000318"/>
    <property type="project" value="GO_Central"/>
</dbReference>
<dbReference type="GO" id="GO:0005634">
    <property type="term" value="C:nucleus"/>
    <property type="evidence" value="ECO:0007005"/>
    <property type="project" value="PomBase"/>
</dbReference>
<dbReference type="GO" id="GO:0140954">
    <property type="term" value="F:histone H3K36 dimethyltransferase activity"/>
    <property type="evidence" value="ECO:0000314"/>
    <property type="project" value="PomBase"/>
</dbReference>
<dbReference type="GO" id="GO:0046975">
    <property type="term" value="F:histone H3K36 methyltransferase activity"/>
    <property type="evidence" value="ECO:0000318"/>
    <property type="project" value="GO_Central"/>
</dbReference>
<dbReference type="GO" id="GO:0140955">
    <property type="term" value="F:histone H3K36 trimethyltransferase activity"/>
    <property type="evidence" value="ECO:0000314"/>
    <property type="project" value="PomBase"/>
</dbReference>
<dbReference type="GO" id="GO:0032259">
    <property type="term" value="P:methylation"/>
    <property type="evidence" value="ECO:0007669"/>
    <property type="project" value="UniProtKB-KW"/>
</dbReference>
<dbReference type="GO" id="GO:0006355">
    <property type="term" value="P:regulation of DNA-templated transcription"/>
    <property type="evidence" value="ECO:0000318"/>
    <property type="project" value="GO_Central"/>
</dbReference>
<dbReference type="GO" id="GO:0140673">
    <property type="term" value="P:transcription elongation-coupled chromatin remodeling"/>
    <property type="evidence" value="ECO:0000269"/>
    <property type="project" value="PomBase"/>
</dbReference>
<dbReference type="CDD" id="cd19172">
    <property type="entry name" value="SET_SETD2"/>
    <property type="match status" value="1"/>
</dbReference>
<dbReference type="FunFam" id="2.170.270.10:FF:000062">
    <property type="entry name" value="Histone-lysine N-methyltransferase, H3 lysine-36 specific"/>
    <property type="match status" value="1"/>
</dbReference>
<dbReference type="Gene3D" id="2.170.270.10">
    <property type="entry name" value="SET domain"/>
    <property type="match status" value="1"/>
</dbReference>
<dbReference type="InterPro" id="IPR006560">
    <property type="entry name" value="AWS_dom"/>
</dbReference>
<dbReference type="InterPro" id="IPR003616">
    <property type="entry name" value="Post-SET_dom"/>
</dbReference>
<dbReference type="InterPro" id="IPR025788">
    <property type="entry name" value="Set2_fungi"/>
</dbReference>
<dbReference type="InterPro" id="IPR050777">
    <property type="entry name" value="SET2_Histone-Lys_MeTrsfase"/>
</dbReference>
<dbReference type="InterPro" id="IPR001214">
    <property type="entry name" value="SET_dom"/>
</dbReference>
<dbReference type="InterPro" id="IPR046341">
    <property type="entry name" value="SET_dom_sf"/>
</dbReference>
<dbReference type="InterPro" id="IPR044437">
    <property type="entry name" value="SETD2/Set2_SET"/>
</dbReference>
<dbReference type="InterPro" id="IPR013257">
    <property type="entry name" value="SRI"/>
</dbReference>
<dbReference type="InterPro" id="IPR035441">
    <property type="entry name" value="TFIIS/LEDGF_dom_sf"/>
</dbReference>
<dbReference type="InterPro" id="IPR017923">
    <property type="entry name" value="TFIIS_N"/>
</dbReference>
<dbReference type="PANTHER" id="PTHR22884">
    <property type="entry name" value="SET DOMAIN PROTEINS"/>
    <property type="match status" value="1"/>
</dbReference>
<dbReference type="Pfam" id="PF17907">
    <property type="entry name" value="AWS"/>
    <property type="match status" value="1"/>
</dbReference>
<dbReference type="Pfam" id="PF08711">
    <property type="entry name" value="Med26"/>
    <property type="match status" value="1"/>
</dbReference>
<dbReference type="Pfam" id="PF00856">
    <property type="entry name" value="SET"/>
    <property type="match status" value="1"/>
</dbReference>
<dbReference type="Pfam" id="PF08236">
    <property type="entry name" value="SRI"/>
    <property type="match status" value="1"/>
</dbReference>
<dbReference type="SMART" id="SM00570">
    <property type="entry name" value="AWS"/>
    <property type="match status" value="1"/>
</dbReference>
<dbReference type="SMART" id="SM00508">
    <property type="entry name" value="PostSET"/>
    <property type="match status" value="1"/>
</dbReference>
<dbReference type="SMART" id="SM00317">
    <property type="entry name" value="SET"/>
    <property type="match status" value="1"/>
</dbReference>
<dbReference type="SUPFAM" id="SSF47676">
    <property type="entry name" value="Conserved domain common to transcription factors TFIIS, elongin A, CRSP70"/>
    <property type="match status" value="1"/>
</dbReference>
<dbReference type="SUPFAM" id="SSF82199">
    <property type="entry name" value="SET domain"/>
    <property type="match status" value="1"/>
</dbReference>
<dbReference type="PROSITE" id="PS51215">
    <property type="entry name" value="AWS"/>
    <property type="match status" value="1"/>
</dbReference>
<dbReference type="PROSITE" id="PS50868">
    <property type="entry name" value="POST_SET"/>
    <property type="match status" value="1"/>
</dbReference>
<dbReference type="PROSITE" id="PS51568">
    <property type="entry name" value="SAM_MT43_SET2_1"/>
    <property type="match status" value="1"/>
</dbReference>
<dbReference type="PROSITE" id="PS50280">
    <property type="entry name" value="SET"/>
    <property type="match status" value="1"/>
</dbReference>